<accession>Q39T44</accession>
<dbReference type="EC" id="2.3.1.191" evidence="1"/>
<dbReference type="EMBL" id="CP000148">
    <property type="protein sequence ID" value="ABB32580.1"/>
    <property type="molecule type" value="Genomic_DNA"/>
</dbReference>
<dbReference type="RefSeq" id="WP_004513265.1">
    <property type="nucleotide sequence ID" value="NC_007517.1"/>
</dbReference>
<dbReference type="SMR" id="Q39T44"/>
<dbReference type="STRING" id="269799.Gmet_2355"/>
<dbReference type="KEGG" id="gme:Gmet_2355"/>
<dbReference type="eggNOG" id="COG1044">
    <property type="taxonomic scope" value="Bacteria"/>
</dbReference>
<dbReference type="HOGENOM" id="CLU_049865_0_0_7"/>
<dbReference type="UniPathway" id="UPA00973"/>
<dbReference type="Proteomes" id="UP000007073">
    <property type="component" value="Chromosome"/>
</dbReference>
<dbReference type="GO" id="GO:0016020">
    <property type="term" value="C:membrane"/>
    <property type="evidence" value="ECO:0007669"/>
    <property type="project" value="GOC"/>
</dbReference>
<dbReference type="GO" id="GO:0016410">
    <property type="term" value="F:N-acyltransferase activity"/>
    <property type="evidence" value="ECO:0007669"/>
    <property type="project" value="InterPro"/>
</dbReference>
<dbReference type="GO" id="GO:0009245">
    <property type="term" value="P:lipid A biosynthetic process"/>
    <property type="evidence" value="ECO:0007669"/>
    <property type="project" value="UniProtKB-UniRule"/>
</dbReference>
<dbReference type="CDD" id="cd03352">
    <property type="entry name" value="LbH_LpxD"/>
    <property type="match status" value="1"/>
</dbReference>
<dbReference type="Gene3D" id="2.160.10.10">
    <property type="entry name" value="Hexapeptide repeat proteins"/>
    <property type="match status" value="1"/>
</dbReference>
<dbReference type="Gene3D" id="3.40.1390.10">
    <property type="entry name" value="MurE/MurF, N-terminal domain"/>
    <property type="match status" value="1"/>
</dbReference>
<dbReference type="HAMAP" id="MF_00523">
    <property type="entry name" value="LpxD"/>
    <property type="match status" value="1"/>
</dbReference>
<dbReference type="InterPro" id="IPR001451">
    <property type="entry name" value="Hexapep"/>
</dbReference>
<dbReference type="InterPro" id="IPR018357">
    <property type="entry name" value="Hexapep_transf_CS"/>
</dbReference>
<dbReference type="InterPro" id="IPR007691">
    <property type="entry name" value="LpxD"/>
</dbReference>
<dbReference type="InterPro" id="IPR011004">
    <property type="entry name" value="Trimer_LpxA-like_sf"/>
</dbReference>
<dbReference type="InterPro" id="IPR020573">
    <property type="entry name" value="UDP_GlcNAc_AcTrfase_non-rep"/>
</dbReference>
<dbReference type="NCBIfam" id="TIGR01853">
    <property type="entry name" value="lipid_A_lpxD"/>
    <property type="match status" value="1"/>
</dbReference>
<dbReference type="NCBIfam" id="NF002060">
    <property type="entry name" value="PRK00892.1"/>
    <property type="match status" value="1"/>
</dbReference>
<dbReference type="PANTHER" id="PTHR43378">
    <property type="entry name" value="UDP-3-O-ACYLGLUCOSAMINE N-ACYLTRANSFERASE"/>
    <property type="match status" value="1"/>
</dbReference>
<dbReference type="PANTHER" id="PTHR43378:SF2">
    <property type="entry name" value="UDP-3-O-ACYLGLUCOSAMINE N-ACYLTRANSFERASE 1, MITOCHONDRIAL-RELATED"/>
    <property type="match status" value="1"/>
</dbReference>
<dbReference type="Pfam" id="PF00132">
    <property type="entry name" value="Hexapep"/>
    <property type="match status" value="2"/>
</dbReference>
<dbReference type="Pfam" id="PF14602">
    <property type="entry name" value="Hexapep_2"/>
    <property type="match status" value="2"/>
</dbReference>
<dbReference type="Pfam" id="PF04613">
    <property type="entry name" value="LpxD"/>
    <property type="match status" value="1"/>
</dbReference>
<dbReference type="SUPFAM" id="SSF51161">
    <property type="entry name" value="Trimeric LpxA-like enzymes"/>
    <property type="match status" value="1"/>
</dbReference>
<dbReference type="PROSITE" id="PS00101">
    <property type="entry name" value="HEXAPEP_TRANSFERASES"/>
    <property type="match status" value="1"/>
</dbReference>
<name>LPXD_GEOMG</name>
<sequence length="345" mass="35942">MAVSRTLRELAEYLGGTVAGDESKTISGVASLDDAADHQITFLANPRYAPKVATTGAGAVVLPPGGERHGRNAIHVANPYLAFAKLLTLFHVAPRKPQGVMEGALVGHNVAMGSDVTIYPGAFVGDGVTLGDRVTIFPGVVIYEGVTLGSDVTLHSNVVVYQGCRIGNRVTIHAGTIIGSDGFGYAPDGDGFYKIPQLGIVVIEDDVEVGANTTIDRAALAATRIGRGTKIDNLVMIAHNCVIGENCTIVSQVGISGSTKLGRRVTLAGQVGVAGHLEIGDNSMVGAKSGIPGNIPAGSMVSGIPAFNHRDWLRASAVVPKLPELRKTIAELEKRVRELEEKQGA</sequence>
<proteinExistence type="inferred from homology"/>
<feature type="chain" id="PRO_0000264377" description="UDP-3-O-acylglucosamine N-acyltransferase">
    <location>
        <begin position="1"/>
        <end position="345"/>
    </location>
</feature>
<feature type="active site" description="Proton acceptor" evidence="1">
    <location>
        <position position="239"/>
    </location>
</feature>
<protein>
    <recommendedName>
        <fullName evidence="1">UDP-3-O-acylglucosamine N-acyltransferase</fullName>
        <ecNumber evidence="1">2.3.1.191</ecNumber>
    </recommendedName>
</protein>
<reference key="1">
    <citation type="journal article" date="2009" name="BMC Microbiol.">
        <title>The genome sequence of Geobacter metallireducens: features of metabolism, physiology and regulation common and dissimilar to Geobacter sulfurreducens.</title>
        <authorList>
            <person name="Aklujkar M."/>
            <person name="Krushkal J."/>
            <person name="DiBartolo G."/>
            <person name="Lapidus A."/>
            <person name="Land M.L."/>
            <person name="Lovley D.R."/>
        </authorList>
    </citation>
    <scope>NUCLEOTIDE SEQUENCE [LARGE SCALE GENOMIC DNA]</scope>
    <source>
        <strain>ATCC 53774 / DSM 7210 / GS-15</strain>
    </source>
</reference>
<comment type="function">
    <text evidence="1">Catalyzes the N-acylation of UDP-3-O-acylglucosamine using 3-hydroxyacyl-ACP as the acyl donor. Is involved in the biosynthesis of lipid A, a phosphorylated glycolipid that anchors the lipopolysaccharide to the outer membrane of the cell.</text>
</comment>
<comment type="catalytic activity">
    <reaction evidence="1">
        <text>a UDP-3-O-[(3R)-3-hydroxyacyl]-alpha-D-glucosamine + a (3R)-hydroxyacyl-[ACP] = a UDP-2-N,3-O-bis[(3R)-3-hydroxyacyl]-alpha-D-glucosamine + holo-[ACP] + H(+)</text>
        <dbReference type="Rhea" id="RHEA:53836"/>
        <dbReference type="Rhea" id="RHEA-COMP:9685"/>
        <dbReference type="Rhea" id="RHEA-COMP:9945"/>
        <dbReference type="ChEBI" id="CHEBI:15378"/>
        <dbReference type="ChEBI" id="CHEBI:64479"/>
        <dbReference type="ChEBI" id="CHEBI:78827"/>
        <dbReference type="ChEBI" id="CHEBI:137740"/>
        <dbReference type="ChEBI" id="CHEBI:137748"/>
        <dbReference type="EC" id="2.3.1.191"/>
    </reaction>
</comment>
<comment type="pathway">
    <text evidence="1">Bacterial outer membrane biogenesis; LPS lipid A biosynthesis.</text>
</comment>
<comment type="subunit">
    <text evidence="1">Homotrimer.</text>
</comment>
<comment type="similarity">
    <text evidence="1">Belongs to the transferase hexapeptide repeat family. LpxD subfamily.</text>
</comment>
<gene>
    <name evidence="1" type="primary">lpxD</name>
    <name type="ordered locus">Gmet_2355</name>
</gene>
<keyword id="KW-0012">Acyltransferase</keyword>
<keyword id="KW-0441">Lipid A biosynthesis</keyword>
<keyword id="KW-0444">Lipid biosynthesis</keyword>
<keyword id="KW-0443">Lipid metabolism</keyword>
<keyword id="KW-1185">Reference proteome</keyword>
<keyword id="KW-0677">Repeat</keyword>
<keyword id="KW-0808">Transferase</keyword>
<organism>
    <name type="scientific">Geobacter metallireducens (strain ATCC 53774 / DSM 7210 / GS-15)</name>
    <dbReference type="NCBI Taxonomy" id="269799"/>
    <lineage>
        <taxon>Bacteria</taxon>
        <taxon>Pseudomonadati</taxon>
        <taxon>Thermodesulfobacteriota</taxon>
        <taxon>Desulfuromonadia</taxon>
        <taxon>Geobacterales</taxon>
        <taxon>Geobacteraceae</taxon>
        <taxon>Geobacter</taxon>
    </lineage>
</organism>
<evidence type="ECO:0000255" key="1">
    <source>
        <dbReference type="HAMAP-Rule" id="MF_00523"/>
    </source>
</evidence>